<proteinExistence type="inferred from homology"/>
<protein>
    <recommendedName>
        <fullName evidence="1">ATP-dependent Clp protease adapter protein ClpS</fullName>
    </recommendedName>
</protein>
<feature type="chain" id="PRO_1000119497" description="ATP-dependent Clp protease adapter protein ClpS">
    <location>
        <begin position="1"/>
        <end position="100"/>
    </location>
</feature>
<name>CLPS_NITV9</name>
<dbReference type="EMBL" id="CP001197">
    <property type="protein sequence ID" value="ACL07416.1"/>
    <property type="molecule type" value="Genomic_DNA"/>
</dbReference>
<dbReference type="SMR" id="B8DJU4"/>
<dbReference type="STRING" id="883.DvMF_0459"/>
<dbReference type="KEGG" id="dvm:DvMF_0459"/>
<dbReference type="eggNOG" id="COG2127">
    <property type="taxonomic scope" value="Bacteria"/>
</dbReference>
<dbReference type="HOGENOM" id="CLU_134358_1_0_7"/>
<dbReference type="OrthoDB" id="9796121at2"/>
<dbReference type="GO" id="GO:0030163">
    <property type="term" value="P:protein catabolic process"/>
    <property type="evidence" value="ECO:0007669"/>
    <property type="project" value="InterPro"/>
</dbReference>
<dbReference type="GO" id="GO:0006508">
    <property type="term" value="P:proteolysis"/>
    <property type="evidence" value="ECO:0007669"/>
    <property type="project" value="UniProtKB-UniRule"/>
</dbReference>
<dbReference type="FunFam" id="3.30.1390.10:FF:000002">
    <property type="entry name" value="ATP-dependent Clp protease adapter protein ClpS"/>
    <property type="match status" value="1"/>
</dbReference>
<dbReference type="Gene3D" id="3.30.1390.10">
    <property type="match status" value="1"/>
</dbReference>
<dbReference type="HAMAP" id="MF_00302">
    <property type="entry name" value="ClpS"/>
    <property type="match status" value="1"/>
</dbReference>
<dbReference type="InterPro" id="IPR022935">
    <property type="entry name" value="ClpS"/>
</dbReference>
<dbReference type="InterPro" id="IPR003769">
    <property type="entry name" value="ClpS_core"/>
</dbReference>
<dbReference type="InterPro" id="IPR014719">
    <property type="entry name" value="Ribosomal_bL12_C/ClpS-like"/>
</dbReference>
<dbReference type="PANTHER" id="PTHR33473:SF19">
    <property type="entry name" value="ATP-DEPENDENT CLP PROTEASE ADAPTER PROTEIN CLPS"/>
    <property type="match status" value="1"/>
</dbReference>
<dbReference type="PANTHER" id="PTHR33473">
    <property type="entry name" value="ATP-DEPENDENT CLP PROTEASE ADAPTER PROTEIN CLPS1, CHLOROPLASTIC"/>
    <property type="match status" value="1"/>
</dbReference>
<dbReference type="Pfam" id="PF02617">
    <property type="entry name" value="ClpS"/>
    <property type="match status" value="1"/>
</dbReference>
<dbReference type="SUPFAM" id="SSF54736">
    <property type="entry name" value="ClpS-like"/>
    <property type="match status" value="1"/>
</dbReference>
<gene>
    <name evidence="1" type="primary">clpS</name>
    <name type="ordered locus">DvMF_0459</name>
</gene>
<sequence>MPDGGRDTELLIEDEVREPRMFRVLLHNDDYTTMEFVVSILIEVFRRTPDEATRIMLAVHEKGVGECGVYTAEVAETKVALVHARARREGYPLRCTLEEV</sequence>
<organism>
    <name type="scientific">Nitratidesulfovibrio vulgaris (strain DSM 19637 / Miyazaki F)</name>
    <name type="common">Desulfovibrio vulgaris</name>
    <dbReference type="NCBI Taxonomy" id="883"/>
    <lineage>
        <taxon>Bacteria</taxon>
        <taxon>Pseudomonadati</taxon>
        <taxon>Thermodesulfobacteriota</taxon>
        <taxon>Desulfovibrionia</taxon>
        <taxon>Desulfovibrionales</taxon>
        <taxon>Desulfovibrionaceae</taxon>
        <taxon>Nitratidesulfovibrio</taxon>
    </lineage>
</organism>
<evidence type="ECO:0000255" key="1">
    <source>
        <dbReference type="HAMAP-Rule" id="MF_00302"/>
    </source>
</evidence>
<accession>B8DJU4</accession>
<comment type="function">
    <text evidence="1">Involved in the modulation of the specificity of the ClpAP-mediated ATP-dependent protein degradation.</text>
</comment>
<comment type="subunit">
    <text evidence="1">Binds to the N-terminal domain of the chaperone ClpA.</text>
</comment>
<comment type="similarity">
    <text evidence="1">Belongs to the ClpS family.</text>
</comment>
<reference key="1">
    <citation type="submission" date="2008-10" db="EMBL/GenBank/DDBJ databases">
        <title>Complete sequence of Desulfovibrio vulgaris str. 'Miyazaki F'.</title>
        <authorList>
            <person name="Lucas S."/>
            <person name="Copeland A."/>
            <person name="Lapidus A."/>
            <person name="Glavina del Rio T."/>
            <person name="Dalin E."/>
            <person name="Tice H."/>
            <person name="Bruce D."/>
            <person name="Goodwin L."/>
            <person name="Pitluck S."/>
            <person name="Sims D."/>
            <person name="Brettin T."/>
            <person name="Detter J.C."/>
            <person name="Han C."/>
            <person name="Larimer F."/>
            <person name="Land M."/>
            <person name="Hauser L."/>
            <person name="Kyrpides N."/>
            <person name="Mikhailova N."/>
            <person name="Hazen T.C."/>
            <person name="Richardson P."/>
        </authorList>
    </citation>
    <scope>NUCLEOTIDE SEQUENCE [LARGE SCALE GENOMIC DNA]</scope>
    <source>
        <strain>DSM 19637 / Miyazaki F</strain>
    </source>
</reference>